<evidence type="ECO:0000255" key="1">
    <source>
        <dbReference type="HAMAP-Rule" id="MF_00303"/>
    </source>
</evidence>
<reference key="1">
    <citation type="journal article" date="2008" name="BMC Genomics">
        <title>Genome sequence and rapid evolution of the rice pathogen Xanthomonas oryzae pv. oryzae PXO99A.</title>
        <authorList>
            <person name="Salzberg S.L."/>
            <person name="Sommer D.D."/>
            <person name="Schatz M.C."/>
            <person name="Phillippy A.M."/>
            <person name="Rabinowicz P.D."/>
            <person name="Tsuge S."/>
            <person name="Furutani A."/>
            <person name="Ochiai H."/>
            <person name="Delcher A.L."/>
            <person name="Kelley D."/>
            <person name="Madupu R."/>
            <person name="Puiu D."/>
            <person name="Radune D."/>
            <person name="Shumway M."/>
            <person name="Trapnell C."/>
            <person name="Aparna G."/>
            <person name="Jha G."/>
            <person name="Pandey A."/>
            <person name="Patil P.B."/>
            <person name="Ishihara H."/>
            <person name="Meyer D.F."/>
            <person name="Szurek B."/>
            <person name="Verdier V."/>
            <person name="Koebnik R."/>
            <person name="Dow J.M."/>
            <person name="Ryan R.P."/>
            <person name="Hirata H."/>
            <person name="Tsuyumu S."/>
            <person name="Won Lee S."/>
            <person name="Seo Y.-S."/>
            <person name="Sriariyanum M."/>
            <person name="Ronald P.C."/>
            <person name="Sonti R.V."/>
            <person name="Van Sluys M.-A."/>
            <person name="Leach J.E."/>
            <person name="White F.F."/>
            <person name="Bogdanove A.J."/>
        </authorList>
    </citation>
    <scope>NUCLEOTIDE SEQUENCE [LARGE SCALE GENOMIC DNA]</scope>
    <source>
        <strain>PXO99A</strain>
    </source>
</reference>
<comment type="function">
    <text evidence="1">Involved in protein export. Acts as a chaperone by maintaining the newly synthesized protein in an open conformation. Functions as a peptidyl-prolyl cis-trans isomerase.</text>
</comment>
<comment type="catalytic activity">
    <reaction evidence="1">
        <text>[protein]-peptidylproline (omega=180) = [protein]-peptidylproline (omega=0)</text>
        <dbReference type="Rhea" id="RHEA:16237"/>
        <dbReference type="Rhea" id="RHEA-COMP:10747"/>
        <dbReference type="Rhea" id="RHEA-COMP:10748"/>
        <dbReference type="ChEBI" id="CHEBI:83833"/>
        <dbReference type="ChEBI" id="CHEBI:83834"/>
        <dbReference type="EC" id="5.2.1.8"/>
    </reaction>
</comment>
<comment type="subcellular location">
    <subcellularLocation>
        <location>Cytoplasm</location>
    </subcellularLocation>
    <text evidence="1">About half TF is bound to the ribosome near the polypeptide exit tunnel while the other half is free in the cytoplasm.</text>
</comment>
<comment type="domain">
    <text evidence="1">Consists of 3 domains; the N-terminus binds the ribosome, the middle domain has PPIase activity, while the C-terminus has intrinsic chaperone activity on its own.</text>
</comment>
<comment type="similarity">
    <text evidence="1">Belongs to the FKBP-type PPIase family. Tig subfamily.</text>
</comment>
<organism>
    <name type="scientific">Xanthomonas oryzae pv. oryzae (strain PXO99A)</name>
    <dbReference type="NCBI Taxonomy" id="360094"/>
    <lineage>
        <taxon>Bacteria</taxon>
        <taxon>Pseudomonadati</taxon>
        <taxon>Pseudomonadota</taxon>
        <taxon>Gammaproteobacteria</taxon>
        <taxon>Lysobacterales</taxon>
        <taxon>Lysobacteraceae</taxon>
        <taxon>Xanthomonas</taxon>
    </lineage>
</organism>
<dbReference type="EC" id="5.2.1.8" evidence="1"/>
<dbReference type="EMBL" id="CP000967">
    <property type="protein sequence ID" value="ACD60769.1"/>
    <property type="molecule type" value="Genomic_DNA"/>
</dbReference>
<dbReference type="RefSeq" id="WP_012445939.1">
    <property type="nucleotide sequence ID" value="NC_010717.2"/>
</dbReference>
<dbReference type="SMR" id="B2SMI4"/>
<dbReference type="KEGG" id="xop:PXO_02478"/>
<dbReference type="eggNOG" id="COG0544">
    <property type="taxonomic scope" value="Bacteria"/>
</dbReference>
<dbReference type="HOGENOM" id="CLU_033058_2_0_6"/>
<dbReference type="Proteomes" id="UP000001740">
    <property type="component" value="Chromosome"/>
</dbReference>
<dbReference type="GO" id="GO:0005737">
    <property type="term" value="C:cytoplasm"/>
    <property type="evidence" value="ECO:0007669"/>
    <property type="project" value="UniProtKB-SubCell"/>
</dbReference>
<dbReference type="GO" id="GO:0003755">
    <property type="term" value="F:peptidyl-prolyl cis-trans isomerase activity"/>
    <property type="evidence" value="ECO:0007669"/>
    <property type="project" value="UniProtKB-UniRule"/>
</dbReference>
<dbReference type="GO" id="GO:0044183">
    <property type="term" value="F:protein folding chaperone"/>
    <property type="evidence" value="ECO:0007669"/>
    <property type="project" value="TreeGrafter"/>
</dbReference>
<dbReference type="GO" id="GO:0043022">
    <property type="term" value="F:ribosome binding"/>
    <property type="evidence" value="ECO:0007669"/>
    <property type="project" value="TreeGrafter"/>
</dbReference>
<dbReference type="GO" id="GO:0051083">
    <property type="term" value="P:'de novo' cotranslational protein folding"/>
    <property type="evidence" value="ECO:0007669"/>
    <property type="project" value="TreeGrafter"/>
</dbReference>
<dbReference type="GO" id="GO:0051301">
    <property type="term" value="P:cell division"/>
    <property type="evidence" value="ECO:0007669"/>
    <property type="project" value="UniProtKB-KW"/>
</dbReference>
<dbReference type="GO" id="GO:0061077">
    <property type="term" value="P:chaperone-mediated protein folding"/>
    <property type="evidence" value="ECO:0007669"/>
    <property type="project" value="TreeGrafter"/>
</dbReference>
<dbReference type="GO" id="GO:0015031">
    <property type="term" value="P:protein transport"/>
    <property type="evidence" value="ECO:0007669"/>
    <property type="project" value="UniProtKB-UniRule"/>
</dbReference>
<dbReference type="GO" id="GO:0043335">
    <property type="term" value="P:protein unfolding"/>
    <property type="evidence" value="ECO:0007669"/>
    <property type="project" value="TreeGrafter"/>
</dbReference>
<dbReference type="Gene3D" id="3.10.50.40">
    <property type="match status" value="1"/>
</dbReference>
<dbReference type="Gene3D" id="3.30.70.1050">
    <property type="entry name" value="Trigger factor ribosome-binding domain"/>
    <property type="match status" value="1"/>
</dbReference>
<dbReference type="Gene3D" id="1.10.3120.10">
    <property type="entry name" value="Trigger factor, C-terminal domain"/>
    <property type="match status" value="1"/>
</dbReference>
<dbReference type="HAMAP" id="MF_00303">
    <property type="entry name" value="Trigger_factor_Tig"/>
    <property type="match status" value="1"/>
</dbReference>
<dbReference type="InterPro" id="IPR046357">
    <property type="entry name" value="PPIase_dom_sf"/>
</dbReference>
<dbReference type="InterPro" id="IPR005215">
    <property type="entry name" value="Trig_fac"/>
</dbReference>
<dbReference type="InterPro" id="IPR008880">
    <property type="entry name" value="Trigger_fac_C"/>
</dbReference>
<dbReference type="InterPro" id="IPR037041">
    <property type="entry name" value="Trigger_fac_C_sf"/>
</dbReference>
<dbReference type="InterPro" id="IPR008881">
    <property type="entry name" value="Trigger_fac_ribosome-bd_bac"/>
</dbReference>
<dbReference type="InterPro" id="IPR036611">
    <property type="entry name" value="Trigger_fac_ribosome-bd_sf"/>
</dbReference>
<dbReference type="InterPro" id="IPR027304">
    <property type="entry name" value="Trigger_fact/SurA_dom_sf"/>
</dbReference>
<dbReference type="NCBIfam" id="TIGR00115">
    <property type="entry name" value="tig"/>
    <property type="match status" value="1"/>
</dbReference>
<dbReference type="PANTHER" id="PTHR30560">
    <property type="entry name" value="TRIGGER FACTOR CHAPERONE AND PEPTIDYL-PROLYL CIS/TRANS ISOMERASE"/>
    <property type="match status" value="1"/>
</dbReference>
<dbReference type="PANTHER" id="PTHR30560:SF3">
    <property type="entry name" value="TRIGGER FACTOR-LIKE PROTEIN TIG, CHLOROPLASTIC"/>
    <property type="match status" value="1"/>
</dbReference>
<dbReference type="Pfam" id="PF05698">
    <property type="entry name" value="Trigger_C"/>
    <property type="match status" value="1"/>
</dbReference>
<dbReference type="Pfam" id="PF05697">
    <property type="entry name" value="Trigger_N"/>
    <property type="match status" value="1"/>
</dbReference>
<dbReference type="PIRSF" id="PIRSF003095">
    <property type="entry name" value="Trigger_factor"/>
    <property type="match status" value="1"/>
</dbReference>
<dbReference type="SUPFAM" id="SSF54534">
    <property type="entry name" value="FKBP-like"/>
    <property type="match status" value="1"/>
</dbReference>
<dbReference type="SUPFAM" id="SSF109998">
    <property type="entry name" value="Triger factor/SurA peptide-binding domain-like"/>
    <property type="match status" value="1"/>
</dbReference>
<dbReference type="SUPFAM" id="SSF102735">
    <property type="entry name" value="Trigger factor ribosome-binding domain"/>
    <property type="match status" value="1"/>
</dbReference>
<keyword id="KW-0131">Cell cycle</keyword>
<keyword id="KW-0132">Cell division</keyword>
<keyword id="KW-0143">Chaperone</keyword>
<keyword id="KW-0963">Cytoplasm</keyword>
<keyword id="KW-0413">Isomerase</keyword>
<keyword id="KW-0697">Rotamase</keyword>
<gene>
    <name evidence="1" type="primary">tig</name>
    <name type="ordered locus">PXO_02478</name>
</gene>
<feature type="chain" id="PRO_1000115601" description="Trigger factor">
    <location>
        <begin position="1"/>
        <end position="430"/>
    </location>
</feature>
<feature type="domain" description="PPIase FKBP-type" evidence="1">
    <location>
        <begin position="157"/>
        <end position="242"/>
    </location>
</feature>
<sequence length="430" mass="48229">MQASIESTGNLERRLTFTLPQERLETHVGGRLRELARTTRIKGFRPGKVPTKVIEQRFGQQVRAEAMEGLLRETFDSAVREHSLRLAGNPRIDQGETDFDFVATFEVVPDFGDIDVTTLSVVRATAEVTDADIDQMIENLRLQRRIWNPVERGAQAGDLVALETWSQAGDERLPADGVETGSSVLGSGVMFDQIEKGLEGLTKGEEKTLSVDFPAEWRVPQLAGKTVQVHVKAVEVSEPVLPAVDKEFIKSFGVKSGDAEQFRADIRTNLERELKGALMNRLRREVGEQLIAAYAHVEMPPRLVENEARSMLAQQVEQVRRSGRDPGQVPADAHQGFMDAAAKRVLVGLLVGEVARRNELRLESRRVSDTLRLIASTYEEPEQVIEMYRNDPQLMNGLQSRVMEEQVIDWIAERAQHTEQSLSFQDAIRV</sequence>
<proteinExistence type="inferred from homology"/>
<accession>B2SMI4</accession>
<name>TIG_XANOP</name>
<protein>
    <recommendedName>
        <fullName evidence="1">Trigger factor</fullName>
        <shortName evidence="1">TF</shortName>
        <ecNumber evidence="1">5.2.1.8</ecNumber>
    </recommendedName>
    <alternativeName>
        <fullName evidence="1">PPIase</fullName>
    </alternativeName>
</protein>